<accession>C4KIH5</accession>
<feature type="chain" id="PRO_1000204295" description="GTP cyclohydrolase 1">
    <location>
        <begin position="1"/>
        <end position="208"/>
    </location>
</feature>
<feature type="binding site" evidence="1">
    <location>
        <position position="89"/>
    </location>
    <ligand>
        <name>Zn(2+)</name>
        <dbReference type="ChEBI" id="CHEBI:29105"/>
    </ligand>
</feature>
<feature type="binding site" evidence="1">
    <location>
        <position position="92"/>
    </location>
    <ligand>
        <name>Zn(2+)</name>
        <dbReference type="ChEBI" id="CHEBI:29105"/>
    </ligand>
</feature>
<feature type="binding site" evidence="1">
    <location>
        <position position="163"/>
    </location>
    <ligand>
        <name>Zn(2+)</name>
        <dbReference type="ChEBI" id="CHEBI:29105"/>
    </ligand>
</feature>
<dbReference type="EC" id="3.5.4.16" evidence="1"/>
<dbReference type="EMBL" id="CP001402">
    <property type="protein sequence ID" value="ACR42389.1"/>
    <property type="molecule type" value="Genomic_DNA"/>
</dbReference>
<dbReference type="RefSeq" id="WP_012711716.1">
    <property type="nucleotide sequence ID" value="NC_012726.1"/>
</dbReference>
<dbReference type="SMR" id="C4KIH5"/>
<dbReference type="GeneID" id="84062091"/>
<dbReference type="KEGG" id="sid:M164_1786"/>
<dbReference type="HOGENOM" id="CLU_049768_3_2_2"/>
<dbReference type="UniPathway" id="UPA00848">
    <property type="reaction ID" value="UER00151"/>
</dbReference>
<dbReference type="Proteomes" id="UP000001479">
    <property type="component" value="Chromosome"/>
</dbReference>
<dbReference type="GO" id="GO:0005737">
    <property type="term" value="C:cytoplasm"/>
    <property type="evidence" value="ECO:0007669"/>
    <property type="project" value="TreeGrafter"/>
</dbReference>
<dbReference type="GO" id="GO:0005525">
    <property type="term" value="F:GTP binding"/>
    <property type="evidence" value="ECO:0007669"/>
    <property type="project" value="UniProtKB-KW"/>
</dbReference>
<dbReference type="GO" id="GO:0003934">
    <property type="term" value="F:GTP cyclohydrolase I activity"/>
    <property type="evidence" value="ECO:0007669"/>
    <property type="project" value="UniProtKB-UniRule"/>
</dbReference>
<dbReference type="GO" id="GO:0008270">
    <property type="term" value="F:zinc ion binding"/>
    <property type="evidence" value="ECO:0007669"/>
    <property type="project" value="UniProtKB-UniRule"/>
</dbReference>
<dbReference type="GO" id="GO:0006730">
    <property type="term" value="P:one-carbon metabolic process"/>
    <property type="evidence" value="ECO:0007669"/>
    <property type="project" value="UniProtKB-UniRule"/>
</dbReference>
<dbReference type="GO" id="GO:0006729">
    <property type="term" value="P:tetrahydrobiopterin biosynthetic process"/>
    <property type="evidence" value="ECO:0007669"/>
    <property type="project" value="TreeGrafter"/>
</dbReference>
<dbReference type="GO" id="GO:0046654">
    <property type="term" value="P:tetrahydrofolate biosynthetic process"/>
    <property type="evidence" value="ECO:0007669"/>
    <property type="project" value="UniProtKB-UniRule"/>
</dbReference>
<dbReference type="FunFam" id="1.10.286.10:FF:000007">
    <property type="entry name" value="GTP cyclohydrolase 1"/>
    <property type="match status" value="1"/>
</dbReference>
<dbReference type="FunFam" id="3.30.1130.10:FF:000001">
    <property type="entry name" value="GTP cyclohydrolase 1"/>
    <property type="match status" value="1"/>
</dbReference>
<dbReference type="Gene3D" id="1.10.286.10">
    <property type="match status" value="1"/>
</dbReference>
<dbReference type="Gene3D" id="3.30.1130.10">
    <property type="match status" value="1"/>
</dbReference>
<dbReference type="HAMAP" id="MF_00223">
    <property type="entry name" value="FolE"/>
    <property type="match status" value="1"/>
</dbReference>
<dbReference type="InterPro" id="IPR043133">
    <property type="entry name" value="GTP-CH-I_C/QueF"/>
</dbReference>
<dbReference type="InterPro" id="IPR043134">
    <property type="entry name" value="GTP-CH-I_N"/>
</dbReference>
<dbReference type="InterPro" id="IPR001474">
    <property type="entry name" value="GTP_CycHdrlase_I"/>
</dbReference>
<dbReference type="InterPro" id="IPR018234">
    <property type="entry name" value="GTP_CycHdrlase_I_CS"/>
</dbReference>
<dbReference type="InterPro" id="IPR020602">
    <property type="entry name" value="GTP_CycHdrlase_I_dom"/>
</dbReference>
<dbReference type="NCBIfam" id="NF006825">
    <property type="entry name" value="PRK09347.1-2"/>
    <property type="match status" value="1"/>
</dbReference>
<dbReference type="NCBIfam" id="NF006826">
    <property type="entry name" value="PRK09347.1-3"/>
    <property type="match status" value="1"/>
</dbReference>
<dbReference type="PANTHER" id="PTHR11109:SF7">
    <property type="entry name" value="GTP CYCLOHYDROLASE 1"/>
    <property type="match status" value="1"/>
</dbReference>
<dbReference type="PANTHER" id="PTHR11109">
    <property type="entry name" value="GTP CYCLOHYDROLASE I"/>
    <property type="match status" value="1"/>
</dbReference>
<dbReference type="Pfam" id="PF01227">
    <property type="entry name" value="GTP_cyclohydroI"/>
    <property type="match status" value="1"/>
</dbReference>
<dbReference type="SUPFAM" id="SSF55620">
    <property type="entry name" value="Tetrahydrobiopterin biosynthesis enzymes-like"/>
    <property type="match status" value="1"/>
</dbReference>
<dbReference type="PROSITE" id="PS00859">
    <property type="entry name" value="GTP_CYCLOHYDROL_1_1"/>
    <property type="match status" value="1"/>
</dbReference>
<dbReference type="PROSITE" id="PS00860">
    <property type="entry name" value="GTP_CYCLOHYDROL_1_2"/>
    <property type="match status" value="1"/>
</dbReference>
<reference key="1">
    <citation type="journal article" date="2009" name="Proc. Natl. Acad. Sci. U.S.A.">
        <title>Biogeography of the Sulfolobus islandicus pan-genome.</title>
        <authorList>
            <person name="Reno M.L."/>
            <person name="Held N.L."/>
            <person name="Fields C.J."/>
            <person name="Burke P.V."/>
            <person name="Whitaker R.J."/>
        </authorList>
    </citation>
    <scope>NUCLEOTIDE SEQUENCE [LARGE SCALE GENOMIC DNA]</scope>
    <source>
        <strain>M.16.4 / Kamchatka #3</strain>
    </source>
</reference>
<sequence length="208" mass="23566">MQKTELDDQKLVEEIARRIREILELLGENPEREGLKETPERVAKALLEMTSGLRTPPPQIKVFSLGEDGEVYEKNQIVLIKDVNFSSLCEHHMLPIIGKIHVAYIVSNSGKVAGFSKIIRIVNYYSSRLQIQERLVEQIADAIMNSEIKPKGVMVIGNAIHMCSYVRGVKDKEAKLVSVAYRGLFKTNRALQNHVFRLLDNANKVNLL</sequence>
<comment type="catalytic activity">
    <reaction evidence="1">
        <text>GTP + H2O = 7,8-dihydroneopterin 3'-triphosphate + formate + H(+)</text>
        <dbReference type="Rhea" id="RHEA:17473"/>
        <dbReference type="ChEBI" id="CHEBI:15377"/>
        <dbReference type="ChEBI" id="CHEBI:15378"/>
        <dbReference type="ChEBI" id="CHEBI:15740"/>
        <dbReference type="ChEBI" id="CHEBI:37565"/>
        <dbReference type="ChEBI" id="CHEBI:58462"/>
        <dbReference type="EC" id="3.5.4.16"/>
    </reaction>
</comment>
<comment type="pathway">
    <text evidence="1">Cofactor biosynthesis; 7,8-dihydroneopterin triphosphate biosynthesis; 7,8-dihydroneopterin triphosphate from GTP: step 1/1.</text>
</comment>
<comment type="subunit">
    <text evidence="1">Homomer.</text>
</comment>
<comment type="similarity">
    <text evidence="1">Belongs to the GTP cyclohydrolase I family.</text>
</comment>
<name>GCH1_SACI6</name>
<keyword id="KW-0342">GTP-binding</keyword>
<keyword id="KW-0378">Hydrolase</keyword>
<keyword id="KW-0479">Metal-binding</keyword>
<keyword id="KW-0547">Nucleotide-binding</keyword>
<keyword id="KW-0554">One-carbon metabolism</keyword>
<keyword id="KW-0862">Zinc</keyword>
<gene>
    <name evidence="1" type="primary">folE</name>
    <name type="ordered locus">M164_1786</name>
</gene>
<protein>
    <recommendedName>
        <fullName evidence="1">GTP cyclohydrolase 1</fullName>
        <ecNumber evidence="1">3.5.4.16</ecNumber>
    </recommendedName>
    <alternativeName>
        <fullName evidence="1">GTP cyclohydrolase I</fullName>
        <shortName evidence="1">GTP-CH-I</shortName>
    </alternativeName>
</protein>
<organism>
    <name type="scientific">Saccharolobus islandicus (strain M.16.4 / Kamchatka #3)</name>
    <name type="common">Sulfolobus islandicus</name>
    <dbReference type="NCBI Taxonomy" id="426118"/>
    <lineage>
        <taxon>Archaea</taxon>
        <taxon>Thermoproteota</taxon>
        <taxon>Thermoprotei</taxon>
        <taxon>Sulfolobales</taxon>
        <taxon>Sulfolobaceae</taxon>
        <taxon>Saccharolobus</taxon>
    </lineage>
</organism>
<evidence type="ECO:0000255" key="1">
    <source>
        <dbReference type="HAMAP-Rule" id="MF_00223"/>
    </source>
</evidence>
<proteinExistence type="inferred from homology"/>